<reference key="1">
    <citation type="journal article" date="2004" name="J. Mol. Microbiol. Biotechnol.">
        <title>The complete genome sequence of Bacillus licheniformis DSM13, an organism with great industrial potential.</title>
        <authorList>
            <person name="Veith B."/>
            <person name="Herzberg C."/>
            <person name="Steckel S."/>
            <person name="Feesche J."/>
            <person name="Maurer K.H."/>
            <person name="Ehrenreich P."/>
            <person name="Baeumer S."/>
            <person name="Henne A."/>
            <person name="Liesegang H."/>
            <person name="Merkl R."/>
            <person name="Ehrenreich A."/>
            <person name="Gottschalk G."/>
        </authorList>
    </citation>
    <scope>NUCLEOTIDE SEQUENCE [LARGE SCALE GENOMIC DNA]</scope>
    <source>
        <strain>ATCC 14580 / DSM 13 / JCM 2505 / CCUG 7422 / NBRC 12200 / NCIMB 9375 / NCTC 10341 / NRRL NRS-1264 / Gibson 46</strain>
    </source>
</reference>
<reference key="2">
    <citation type="journal article" date="2004" name="Genome Biol.">
        <title>Complete genome sequence of the industrial bacterium Bacillus licheniformis and comparisons with closely related Bacillus species.</title>
        <authorList>
            <person name="Rey M.W."/>
            <person name="Ramaiya P."/>
            <person name="Nelson B.A."/>
            <person name="Brody-Karpin S.D."/>
            <person name="Zaretsky E.J."/>
            <person name="Tang M."/>
            <person name="Lopez de Leon A."/>
            <person name="Xiang H."/>
            <person name="Gusti V."/>
            <person name="Clausen I.G."/>
            <person name="Olsen P.B."/>
            <person name="Rasmussen M.D."/>
            <person name="Andersen J.T."/>
            <person name="Joergensen P.L."/>
            <person name="Larsen T.S."/>
            <person name="Sorokin A."/>
            <person name="Bolotin A."/>
            <person name="Lapidus A."/>
            <person name="Galleron N."/>
            <person name="Ehrlich S.D."/>
            <person name="Berka R.M."/>
        </authorList>
    </citation>
    <scope>NUCLEOTIDE SEQUENCE [LARGE SCALE GENOMIC DNA]</scope>
    <source>
        <strain>ATCC 14580 / DSM 13 / JCM 2505 / CCUG 7422 / NBRC 12200 / NCIMB 9375 / NCTC 10341 / NRRL NRS-1264 / Gibson 46</strain>
    </source>
</reference>
<feature type="chain" id="PRO_0000364798" description="Ferredoxin--NADP reductase 2">
    <location>
        <begin position="1"/>
        <end position="332"/>
    </location>
</feature>
<feature type="binding site" evidence="1">
    <location>
        <position position="37"/>
    </location>
    <ligand>
        <name>FAD</name>
        <dbReference type="ChEBI" id="CHEBI:57692"/>
    </ligand>
</feature>
<feature type="binding site" evidence="1">
    <location>
        <position position="45"/>
    </location>
    <ligand>
        <name>FAD</name>
        <dbReference type="ChEBI" id="CHEBI:57692"/>
    </ligand>
</feature>
<feature type="binding site" evidence="1">
    <location>
        <position position="50"/>
    </location>
    <ligand>
        <name>FAD</name>
        <dbReference type="ChEBI" id="CHEBI:57692"/>
    </ligand>
</feature>
<feature type="binding site" evidence="1">
    <location>
        <position position="90"/>
    </location>
    <ligand>
        <name>FAD</name>
        <dbReference type="ChEBI" id="CHEBI:57692"/>
    </ligand>
</feature>
<feature type="binding site" evidence="1">
    <location>
        <position position="124"/>
    </location>
    <ligand>
        <name>FAD</name>
        <dbReference type="ChEBI" id="CHEBI:57692"/>
    </ligand>
</feature>
<feature type="binding site" evidence="1">
    <location>
        <position position="285"/>
    </location>
    <ligand>
        <name>FAD</name>
        <dbReference type="ChEBI" id="CHEBI:57692"/>
    </ligand>
</feature>
<feature type="binding site" evidence="1">
    <location>
        <position position="326"/>
    </location>
    <ligand>
        <name>FAD</name>
        <dbReference type="ChEBI" id="CHEBI:57692"/>
    </ligand>
</feature>
<protein>
    <recommendedName>
        <fullName evidence="1">Ferredoxin--NADP reductase 2</fullName>
        <shortName evidence="1">FNR 2</shortName>
        <shortName evidence="1">Fd-NADP(+) reductase 2</shortName>
        <ecNumber evidence="1">1.18.1.2</ecNumber>
    </recommendedName>
</protein>
<accession>Q65FE0</accession>
<accession>Q62QV5</accession>
<dbReference type="EC" id="1.18.1.2" evidence="1"/>
<dbReference type="EMBL" id="CP000002">
    <property type="protein sequence ID" value="AAU24855.1"/>
    <property type="molecule type" value="Genomic_DNA"/>
</dbReference>
<dbReference type="EMBL" id="AE017333">
    <property type="protein sequence ID" value="AAU42224.1"/>
    <property type="molecule type" value="Genomic_DNA"/>
</dbReference>
<dbReference type="SMR" id="Q65FE0"/>
<dbReference type="STRING" id="279010.BL03143"/>
<dbReference type="KEGG" id="bld:BLi03393"/>
<dbReference type="KEGG" id="bli:BL03143"/>
<dbReference type="eggNOG" id="COG0492">
    <property type="taxonomic scope" value="Bacteria"/>
</dbReference>
<dbReference type="HOGENOM" id="CLU_031864_5_5_9"/>
<dbReference type="Proteomes" id="UP000000606">
    <property type="component" value="Chromosome"/>
</dbReference>
<dbReference type="GO" id="GO:0004324">
    <property type="term" value="F:ferredoxin-NADP+ reductase activity"/>
    <property type="evidence" value="ECO:0007669"/>
    <property type="project" value="UniProtKB-UniRule"/>
</dbReference>
<dbReference type="GO" id="GO:0050660">
    <property type="term" value="F:flavin adenine dinucleotide binding"/>
    <property type="evidence" value="ECO:0007669"/>
    <property type="project" value="UniProtKB-UniRule"/>
</dbReference>
<dbReference type="GO" id="GO:0050661">
    <property type="term" value="F:NADP binding"/>
    <property type="evidence" value="ECO:0007669"/>
    <property type="project" value="UniProtKB-UniRule"/>
</dbReference>
<dbReference type="Gene3D" id="3.50.50.60">
    <property type="entry name" value="FAD/NAD(P)-binding domain"/>
    <property type="match status" value="2"/>
</dbReference>
<dbReference type="HAMAP" id="MF_01685">
    <property type="entry name" value="FENR2"/>
    <property type="match status" value="1"/>
</dbReference>
<dbReference type="InterPro" id="IPR036188">
    <property type="entry name" value="FAD/NAD-bd_sf"/>
</dbReference>
<dbReference type="InterPro" id="IPR023753">
    <property type="entry name" value="FAD/NAD-binding_dom"/>
</dbReference>
<dbReference type="InterPro" id="IPR022890">
    <property type="entry name" value="Fd--NADP_Rdtase_type_2"/>
</dbReference>
<dbReference type="InterPro" id="IPR050097">
    <property type="entry name" value="Ferredoxin-NADP_redctase_2"/>
</dbReference>
<dbReference type="PANTHER" id="PTHR48105">
    <property type="entry name" value="THIOREDOXIN REDUCTASE 1-RELATED-RELATED"/>
    <property type="match status" value="1"/>
</dbReference>
<dbReference type="Pfam" id="PF07992">
    <property type="entry name" value="Pyr_redox_2"/>
    <property type="match status" value="1"/>
</dbReference>
<dbReference type="PRINTS" id="PR00368">
    <property type="entry name" value="FADPNR"/>
</dbReference>
<dbReference type="PRINTS" id="PR00469">
    <property type="entry name" value="PNDRDTASEII"/>
</dbReference>
<dbReference type="SUPFAM" id="SSF51905">
    <property type="entry name" value="FAD/NAD(P)-binding domain"/>
    <property type="match status" value="1"/>
</dbReference>
<name>FENR2_BACLD</name>
<organism>
    <name type="scientific">Bacillus licheniformis (strain ATCC 14580 / DSM 13 / JCM 2505 / CCUG 7422 / NBRC 12200 / NCIMB 9375 / NCTC 10341 / NRRL NRS-1264 / Gibson 46)</name>
    <dbReference type="NCBI Taxonomy" id="279010"/>
    <lineage>
        <taxon>Bacteria</taxon>
        <taxon>Bacillati</taxon>
        <taxon>Bacillota</taxon>
        <taxon>Bacilli</taxon>
        <taxon>Bacillales</taxon>
        <taxon>Bacillaceae</taxon>
        <taxon>Bacillus</taxon>
    </lineage>
</organism>
<gene>
    <name type="ordered locus">BLi03393</name>
    <name type="ordered locus">BL03143</name>
</gene>
<keyword id="KW-0274">FAD</keyword>
<keyword id="KW-0285">Flavoprotein</keyword>
<keyword id="KW-0521">NADP</keyword>
<keyword id="KW-0560">Oxidoreductase</keyword>
<keyword id="KW-1185">Reference proteome</keyword>
<proteinExistence type="inferred from homology"/>
<comment type="catalytic activity">
    <reaction evidence="1">
        <text>2 reduced [2Fe-2S]-[ferredoxin] + NADP(+) + H(+) = 2 oxidized [2Fe-2S]-[ferredoxin] + NADPH</text>
        <dbReference type="Rhea" id="RHEA:20125"/>
        <dbReference type="Rhea" id="RHEA-COMP:10000"/>
        <dbReference type="Rhea" id="RHEA-COMP:10001"/>
        <dbReference type="ChEBI" id="CHEBI:15378"/>
        <dbReference type="ChEBI" id="CHEBI:33737"/>
        <dbReference type="ChEBI" id="CHEBI:33738"/>
        <dbReference type="ChEBI" id="CHEBI:57783"/>
        <dbReference type="ChEBI" id="CHEBI:58349"/>
        <dbReference type="EC" id="1.18.1.2"/>
    </reaction>
</comment>
<comment type="cofactor">
    <cofactor evidence="1">
        <name>FAD</name>
        <dbReference type="ChEBI" id="CHEBI:57692"/>
    </cofactor>
    <text evidence="1">Binds 1 FAD per subunit.</text>
</comment>
<comment type="subunit">
    <text evidence="1">Homodimer.</text>
</comment>
<comment type="similarity">
    <text evidence="1">Belongs to the ferredoxin--NADP reductase type 2 family.</text>
</comment>
<evidence type="ECO:0000255" key="1">
    <source>
        <dbReference type="HAMAP-Rule" id="MF_01685"/>
    </source>
</evidence>
<sequence>MREDTKVYDITIIGGGPVGLFTAFYGGMRQASVKIIESLPQLGGQLSALYPEKYIYDVAGFPKIRAQELVDNLKEQMAKFDQTVCLEQAVESVEKQADGIFKLVTNKEIHYSKTVIITAGNGAFQPRKLELESAAQFENANLHYFIDDLNQFAGKRVAVLGGGDSAVDWALMLEPIAKEVSIIHRRDKFRAHEHSVENLRNSKVNVLTPFVPTELIGSERIEQIVIEEVKGERKEIIDVDDVIVNFGFVSSLGPIKNWGLEIEKNSIVVKSTMETNIEGFYAAGDICTYEGKVKLIASGFGEAPTAVNNAKAYMDPKARVQPLHSTSMFENK</sequence>